<name>Y1297_STAS1</name>
<feature type="chain" id="PRO_0000267180" description="UPF0398 protein SSP1297">
    <location>
        <begin position="1"/>
        <end position="188"/>
    </location>
</feature>
<comment type="similarity">
    <text evidence="1">Belongs to the UPF0398 family.</text>
</comment>
<sequence>MIKTVYVTGYKSFELNIFKDDAPEVSYLKKFIEHKLKQLIEEGLEWVLIQGQMGIELWTAEVVLALKATYPDLKLGIITPFYGHIDRWNEQNQAKYNHIAHHADFVDSVFHSSYEGPHQFKQTDQFMLAHSDTTLLIYDEEQEASPKFFKQMLVDFMEKTNYTCDIVTFDELTEFINDLQWSQEQSFE</sequence>
<organism>
    <name type="scientific">Staphylococcus saprophyticus subsp. saprophyticus (strain ATCC 15305 / DSM 20229 / NCIMB 8711 / NCTC 7292 / S-41)</name>
    <dbReference type="NCBI Taxonomy" id="342451"/>
    <lineage>
        <taxon>Bacteria</taxon>
        <taxon>Bacillati</taxon>
        <taxon>Bacillota</taxon>
        <taxon>Bacilli</taxon>
        <taxon>Bacillales</taxon>
        <taxon>Staphylococcaceae</taxon>
        <taxon>Staphylococcus</taxon>
    </lineage>
</organism>
<evidence type="ECO:0000255" key="1">
    <source>
        <dbReference type="HAMAP-Rule" id="MF_01575"/>
    </source>
</evidence>
<reference key="1">
    <citation type="journal article" date="2005" name="Proc. Natl. Acad. Sci. U.S.A.">
        <title>Whole genome sequence of Staphylococcus saprophyticus reveals the pathogenesis of uncomplicated urinary tract infection.</title>
        <authorList>
            <person name="Kuroda M."/>
            <person name="Yamashita A."/>
            <person name="Hirakawa H."/>
            <person name="Kumano M."/>
            <person name="Morikawa K."/>
            <person name="Higashide M."/>
            <person name="Maruyama A."/>
            <person name="Inose Y."/>
            <person name="Matoba K."/>
            <person name="Toh H."/>
            <person name="Kuhara S."/>
            <person name="Hattori M."/>
            <person name="Ohta T."/>
        </authorList>
    </citation>
    <scope>NUCLEOTIDE SEQUENCE [LARGE SCALE GENOMIC DNA]</scope>
    <source>
        <strain>ATCC 15305 / DSM 20229 / NCIMB 8711 / NCTC 7292 / S-41</strain>
    </source>
</reference>
<dbReference type="EMBL" id="AP008934">
    <property type="protein sequence ID" value="BAE18442.1"/>
    <property type="molecule type" value="Genomic_DNA"/>
</dbReference>
<dbReference type="RefSeq" id="WP_002483272.1">
    <property type="nucleotide sequence ID" value="NZ_MTGA01000038.1"/>
</dbReference>
<dbReference type="SMR" id="Q49XQ3"/>
<dbReference type="KEGG" id="ssp:SSP1297"/>
<dbReference type="eggNOG" id="COG4474">
    <property type="taxonomic scope" value="Bacteria"/>
</dbReference>
<dbReference type="HOGENOM" id="CLU_105319_0_0_9"/>
<dbReference type="OrthoDB" id="2301957at2"/>
<dbReference type="Proteomes" id="UP000006371">
    <property type="component" value="Chromosome"/>
</dbReference>
<dbReference type="Gene3D" id="3.40.50.450">
    <property type="match status" value="1"/>
</dbReference>
<dbReference type="HAMAP" id="MF_01575">
    <property type="entry name" value="UPF0398"/>
    <property type="match status" value="1"/>
</dbReference>
<dbReference type="InterPro" id="IPR010697">
    <property type="entry name" value="YspA"/>
</dbReference>
<dbReference type="NCBIfam" id="NF010181">
    <property type="entry name" value="PRK13660.1"/>
    <property type="match status" value="1"/>
</dbReference>
<dbReference type="PANTHER" id="PTHR38440:SF1">
    <property type="entry name" value="UPF0398 PROTEIN SPR0331"/>
    <property type="match status" value="1"/>
</dbReference>
<dbReference type="PANTHER" id="PTHR38440">
    <property type="entry name" value="UPF0398 PROTEIN YPSA"/>
    <property type="match status" value="1"/>
</dbReference>
<dbReference type="Pfam" id="PF06908">
    <property type="entry name" value="YpsA"/>
    <property type="match status" value="1"/>
</dbReference>
<dbReference type="PIRSF" id="PIRSF021290">
    <property type="entry name" value="DUF1273"/>
    <property type="match status" value="1"/>
</dbReference>
<dbReference type="SUPFAM" id="SSF102405">
    <property type="entry name" value="MCP/YpsA-like"/>
    <property type="match status" value="1"/>
</dbReference>
<accession>Q49XQ3</accession>
<keyword id="KW-1185">Reference proteome</keyword>
<protein>
    <recommendedName>
        <fullName evidence="1">UPF0398 protein SSP1297</fullName>
    </recommendedName>
</protein>
<proteinExistence type="inferred from homology"/>
<gene>
    <name type="ordered locus">SSP1297</name>
</gene>